<accession>A9GIP6</accession>
<protein>
    <recommendedName>
        <fullName evidence="1">Fluoride-specific ion channel FluC</fullName>
    </recommendedName>
</protein>
<gene>
    <name evidence="1" type="primary">fluC</name>
    <name evidence="1" type="synonym">crcB</name>
    <name type="ordered locus">sce3136</name>
</gene>
<feature type="chain" id="PRO_1000081024" description="Fluoride-specific ion channel FluC">
    <location>
        <begin position="1"/>
        <end position="127"/>
    </location>
</feature>
<feature type="transmembrane region" description="Helical" evidence="1">
    <location>
        <begin position="4"/>
        <end position="24"/>
    </location>
</feature>
<feature type="transmembrane region" description="Helical" evidence="1">
    <location>
        <begin position="36"/>
        <end position="56"/>
    </location>
</feature>
<feature type="transmembrane region" description="Helical" evidence="1">
    <location>
        <begin position="100"/>
        <end position="120"/>
    </location>
</feature>
<feature type="binding site" evidence="1">
    <location>
        <position position="75"/>
    </location>
    <ligand>
        <name>Na(+)</name>
        <dbReference type="ChEBI" id="CHEBI:29101"/>
        <note>structural</note>
    </ligand>
</feature>
<feature type="binding site" evidence="1">
    <location>
        <position position="78"/>
    </location>
    <ligand>
        <name>Na(+)</name>
        <dbReference type="ChEBI" id="CHEBI:29101"/>
        <note>structural</note>
    </ligand>
</feature>
<evidence type="ECO:0000255" key="1">
    <source>
        <dbReference type="HAMAP-Rule" id="MF_00454"/>
    </source>
</evidence>
<proteinExistence type="inferred from homology"/>
<comment type="function">
    <text evidence="1">Fluoride-specific ion channel. Important for reducing fluoride concentration in the cell, thus reducing its toxicity.</text>
</comment>
<comment type="catalytic activity">
    <reaction evidence="1">
        <text>fluoride(in) = fluoride(out)</text>
        <dbReference type="Rhea" id="RHEA:76159"/>
        <dbReference type="ChEBI" id="CHEBI:17051"/>
    </reaction>
    <physiologicalReaction direction="left-to-right" evidence="1">
        <dbReference type="Rhea" id="RHEA:76160"/>
    </physiologicalReaction>
</comment>
<comment type="activity regulation">
    <text evidence="1">Na(+) is not transported, but it plays an essential structural role and its presence is essential for fluoride channel function.</text>
</comment>
<comment type="subcellular location">
    <subcellularLocation>
        <location evidence="1">Cell inner membrane</location>
        <topology evidence="1">Multi-pass membrane protein</topology>
    </subcellularLocation>
</comment>
<comment type="similarity">
    <text evidence="1">Belongs to the fluoride channel Fluc/FEX (TC 1.A.43) family.</text>
</comment>
<name>FLUC_SORC5</name>
<dbReference type="EMBL" id="AM746676">
    <property type="protein sequence ID" value="CAN93295.1"/>
    <property type="molecule type" value="Genomic_DNA"/>
</dbReference>
<dbReference type="RefSeq" id="WP_012235767.1">
    <property type="nucleotide sequence ID" value="NC_010162.1"/>
</dbReference>
<dbReference type="SMR" id="A9GIP6"/>
<dbReference type="STRING" id="448385.sce3136"/>
<dbReference type="KEGG" id="scl:sce3136"/>
<dbReference type="eggNOG" id="COG0239">
    <property type="taxonomic scope" value="Bacteria"/>
</dbReference>
<dbReference type="HOGENOM" id="CLU_114342_2_1_7"/>
<dbReference type="OrthoDB" id="9806299at2"/>
<dbReference type="BioCyc" id="SCEL448385:SCE_RS16070-MONOMER"/>
<dbReference type="Proteomes" id="UP000002139">
    <property type="component" value="Chromosome"/>
</dbReference>
<dbReference type="GO" id="GO:0005886">
    <property type="term" value="C:plasma membrane"/>
    <property type="evidence" value="ECO:0007669"/>
    <property type="project" value="UniProtKB-SubCell"/>
</dbReference>
<dbReference type="GO" id="GO:0062054">
    <property type="term" value="F:fluoride channel activity"/>
    <property type="evidence" value="ECO:0007669"/>
    <property type="project" value="UniProtKB-UniRule"/>
</dbReference>
<dbReference type="GO" id="GO:0046872">
    <property type="term" value="F:metal ion binding"/>
    <property type="evidence" value="ECO:0007669"/>
    <property type="project" value="UniProtKB-KW"/>
</dbReference>
<dbReference type="GO" id="GO:0140114">
    <property type="term" value="P:cellular detoxification of fluoride"/>
    <property type="evidence" value="ECO:0007669"/>
    <property type="project" value="UniProtKB-UniRule"/>
</dbReference>
<dbReference type="HAMAP" id="MF_00454">
    <property type="entry name" value="FluC"/>
    <property type="match status" value="1"/>
</dbReference>
<dbReference type="InterPro" id="IPR003691">
    <property type="entry name" value="FluC"/>
</dbReference>
<dbReference type="NCBIfam" id="TIGR00494">
    <property type="entry name" value="crcB"/>
    <property type="match status" value="1"/>
</dbReference>
<dbReference type="PANTHER" id="PTHR28259">
    <property type="entry name" value="FLUORIDE EXPORT PROTEIN 1-RELATED"/>
    <property type="match status" value="1"/>
</dbReference>
<dbReference type="PANTHER" id="PTHR28259:SF1">
    <property type="entry name" value="FLUORIDE EXPORT PROTEIN 1-RELATED"/>
    <property type="match status" value="1"/>
</dbReference>
<dbReference type="Pfam" id="PF02537">
    <property type="entry name" value="CRCB"/>
    <property type="match status" value="1"/>
</dbReference>
<sequence>MERWFWIGLGGAAGTLARYGLSTWCQQRFGAEFPYGTLAVNVIGSFLLGAIGEIAATTELLSPTLRLSLSTGVMGGFTTYSSFNNETIRLIEYKSWAAGLANIAITLVVCLLAGVLGMVVARRLIAG</sequence>
<keyword id="KW-0997">Cell inner membrane</keyword>
<keyword id="KW-1003">Cell membrane</keyword>
<keyword id="KW-0407">Ion channel</keyword>
<keyword id="KW-0406">Ion transport</keyword>
<keyword id="KW-0472">Membrane</keyword>
<keyword id="KW-0479">Metal-binding</keyword>
<keyword id="KW-1185">Reference proteome</keyword>
<keyword id="KW-0915">Sodium</keyword>
<keyword id="KW-0812">Transmembrane</keyword>
<keyword id="KW-1133">Transmembrane helix</keyword>
<keyword id="KW-0813">Transport</keyword>
<organism>
    <name type="scientific">Sorangium cellulosum (strain So ce56)</name>
    <name type="common">Polyangium cellulosum (strain So ce56)</name>
    <dbReference type="NCBI Taxonomy" id="448385"/>
    <lineage>
        <taxon>Bacteria</taxon>
        <taxon>Pseudomonadati</taxon>
        <taxon>Myxococcota</taxon>
        <taxon>Polyangia</taxon>
        <taxon>Polyangiales</taxon>
        <taxon>Polyangiaceae</taxon>
        <taxon>Sorangium</taxon>
    </lineage>
</organism>
<reference key="1">
    <citation type="journal article" date="2007" name="Nat. Biotechnol.">
        <title>Complete genome sequence of the myxobacterium Sorangium cellulosum.</title>
        <authorList>
            <person name="Schneiker S."/>
            <person name="Perlova O."/>
            <person name="Kaiser O."/>
            <person name="Gerth K."/>
            <person name="Alici A."/>
            <person name="Altmeyer M.O."/>
            <person name="Bartels D."/>
            <person name="Bekel T."/>
            <person name="Beyer S."/>
            <person name="Bode E."/>
            <person name="Bode H.B."/>
            <person name="Bolten C.J."/>
            <person name="Choudhuri J.V."/>
            <person name="Doss S."/>
            <person name="Elnakady Y.A."/>
            <person name="Frank B."/>
            <person name="Gaigalat L."/>
            <person name="Goesmann A."/>
            <person name="Groeger C."/>
            <person name="Gross F."/>
            <person name="Jelsbak L."/>
            <person name="Jelsbak L."/>
            <person name="Kalinowski J."/>
            <person name="Kegler C."/>
            <person name="Knauber T."/>
            <person name="Konietzny S."/>
            <person name="Kopp M."/>
            <person name="Krause L."/>
            <person name="Krug D."/>
            <person name="Linke B."/>
            <person name="Mahmud T."/>
            <person name="Martinez-Arias R."/>
            <person name="McHardy A.C."/>
            <person name="Merai M."/>
            <person name="Meyer F."/>
            <person name="Mormann S."/>
            <person name="Munoz-Dorado J."/>
            <person name="Perez J."/>
            <person name="Pradella S."/>
            <person name="Rachid S."/>
            <person name="Raddatz G."/>
            <person name="Rosenau F."/>
            <person name="Rueckert C."/>
            <person name="Sasse F."/>
            <person name="Scharfe M."/>
            <person name="Schuster S.C."/>
            <person name="Suen G."/>
            <person name="Treuner-Lange A."/>
            <person name="Velicer G.J."/>
            <person name="Vorholter F.-J."/>
            <person name="Weissman K.J."/>
            <person name="Welch R.D."/>
            <person name="Wenzel S.C."/>
            <person name="Whitworth D.E."/>
            <person name="Wilhelm S."/>
            <person name="Wittmann C."/>
            <person name="Bloecker H."/>
            <person name="Puehler A."/>
            <person name="Mueller R."/>
        </authorList>
    </citation>
    <scope>NUCLEOTIDE SEQUENCE [LARGE SCALE GENOMIC DNA]</scope>
    <source>
        <strain>So ce56</strain>
    </source>
</reference>